<sequence length="243" mass="27310">MNRIKAVGYENNELKEKAQLLADQLNLQLDQNADTCLFVTPEKLTLKIRNFSLMFADFSAMTWSKRRGEGKRQGLIRACKPTKGIKILDATAGWGKDAAILATFGADVVMLERHPVMAALLADALSRRNEADIQKMCLSLIASDAISFLHSLQEKDYPDIIYIDPMHPERNKSALVKKEMQVLQQLIGTDHDAMELIELSLSHVKSRVVVKWPQKVKPLLPPDASIDGKTVRFDIYMAQFSSN</sequence>
<protein>
    <recommendedName>
        <fullName evidence="1">Ribosomal RNA small subunit methyltransferase J</fullName>
        <ecNumber evidence="1">2.1.1.242</ecNumber>
    </recommendedName>
    <alternativeName>
        <fullName evidence="1">16S rRNA m2G1516 methyltransferase</fullName>
    </alternativeName>
    <alternativeName>
        <fullName evidence="1">rRNA (guanine-N(2)-)-methyltransferase</fullName>
    </alternativeName>
</protein>
<comment type="function">
    <text evidence="1">Specifically methylates the guanosine in position 1516 of 16S rRNA.</text>
</comment>
<comment type="catalytic activity">
    <reaction evidence="1">
        <text>guanosine(1516) in 16S rRNA + S-adenosyl-L-methionine = N(2)-methylguanosine(1516) in 16S rRNA + S-adenosyl-L-homocysteine + H(+)</text>
        <dbReference type="Rhea" id="RHEA:43220"/>
        <dbReference type="Rhea" id="RHEA-COMP:10412"/>
        <dbReference type="Rhea" id="RHEA-COMP:10413"/>
        <dbReference type="ChEBI" id="CHEBI:15378"/>
        <dbReference type="ChEBI" id="CHEBI:57856"/>
        <dbReference type="ChEBI" id="CHEBI:59789"/>
        <dbReference type="ChEBI" id="CHEBI:74269"/>
        <dbReference type="ChEBI" id="CHEBI:74481"/>
        <dbReference type="EC" id="2.1.1.242"/>
    </reaction>
</comment>
<comment type="subcellular location">
    <subcellularLocation>
        <location evidence="1">Cytoplasm</location>
    </subcellularLocation>
</comment>
<comment type="similarity">
    <text evidence="1">Belongs to the methyltransferase superfamily. RsmJ family.</text>
</comment>
<name>RSMJ_LEGPH</name>
<gene>
    <name evidence="1" type="primary">rsmJ</name>
    <name type="ordered locus">lpg1837</name>
</gene>
<keyword id="KW-0963">Cytoplasm</keyword>
<keyword id="KW-0489">Methyltransferase</keyword>
<keyword id="KW-1185">Reference proteome</keyword>
<keyword id="KW-0698">rRNA processing</keyword>
<keyword id="KW-0949">S-adenosyl-L-methionine</keyword>
<keyword id="KW-0808">Transferase</keyword>
<organism>
    <name type="scientific">Legionella pneumophila subsp. pneumophila (strain Philadelphia 1 / ATCC 33152 / DSM 7513)</name>
    <dbReference type="NCBI Taxonomy" id="272624"/>
    <lineage>
        <taxon>Bacteria</taxon>
        <taxon>Pseudomonadati</taxon>
        <taxon>Pseudomonadota</taxon>
        <taxon>Gammaproteobacteria</taxon>
        <taxon>Legionellales</taxon>
        <taxon>Legionellaceae</taxon>
        <taxon>Legionella</taxon>
    </lineage>
</organism>
<reference key="1">
    <citation type="journal article" date="2004" name="Science">
        <title>The genomic sequence of the accidental pathogen Legionella pneumophila.</title>
        <authorList>
            <person name="Chien M."/>
            <person name="Morozova I."/>
            <person name="Shi S."/>
            <person name="Sheng H."/>
            <person name="Chen J."/>
            <person name="Gomez S.M."/>
            <person name="Asamani G."/>
            <person name="Hill K."/>
            <person name="Nuara J."/>
            <person name="Feder M."/>
            <person name="Rineer J."/>
            <person name="Greenberg J.J."/>
            <person name="Steshenko V."/>
            <person name="Park S.H."/>
            <person name="Zhao B."/>
            <person name="Teplitskaya E."/>
            <person name="Edwards J.R."/>
            <person name="Pampou S."/>
            <person name="Georghiou A."/>
            <person name="Chou I.-C."/>
            <person name="Iannuccilli W."/>
            <person name="Ulz M.E."/>
            <person name="Kim D.H."/>
            <person name="Geringer-Sameth A."/>
            <person name="Goldsberry C."/>
            <person name="Morozov P."/>
            <person name="Fischer S.G."/>
            <person name="Segal G."/>
            <person name="Qu X."/>
            <person name="Rzhetsky A."/>
            <person name="Zhang P."/>
            <person name="Cayanis E."/>
            <person name="De Jong P.J."/>
            <person name="Ju J."/>
            <person name="Kalachikov S."/>
            <person name="Shuman H.A."/>
            <person name="Russo J.J."/>
        </authorList>
    </citation>
    <scope>NUCLEOTIDE SEQUENCE [LARGE SCALE GENOMIC DNA]</scope>
    <source>
        <strain>Philadelphia 1 / ATCC 33152 / DSM 7513</strain>
    </source>
</reference>
<evidence type="ECO:0000255" key="1">
    <source>
        <dbReference type="HAMAP-Rule" id="MF_01523"/>
    </source>
</evidence>
<accession>Q5ZUG1</accession>
<dbReference type="EC" id="2.1.1.242" evidence="1"/>
<dbReference type="EMBL" id="AE017354">
    <property type="protein sequence ID" value="AAU27916.1"/>
    <property type="molecule type" value="Genomic_DNA"/>
</dbReference>
<dbReference type="RefSeq" id="WP_010947563.1">
    <property type="nucleotide sequence ID" value="NC_002942.5"/>
</dbReference>
<dbReference type="RefSeq" id="YP_095863.1">
    <property type="nucleotide sequence ID" value="NC_002942.5"/>
</dbReference>
<dbReference type="SMR" id="Q5ZUG1"/>
<dbReference type="STRING" id="272624.lpg1837"/>
<dbReference type="PaxDb" id="272624-lpg1837"/>
<dbReference type="KEGG" id="lpn:lpg1837"/>
<dbReference type="PATRIC" id="fig|272624.6.peg.1927"/>
<dbReference type="eggNOG" id="COG0742">
    <property type="taxonomic scope" value="Bacteria"/>
</dbReference>
<dbReference type="HOGENOM" id="CLU_076324_1_0_6"/>
<dbReference type="OrthoDB" id="3191794at2"/>
<dbReference type="Proteomes" id="UP000000609">
    <property type="component" value="Chromosome"/>
</dbReference>
<dbReference type="GO" id="GO:0005737">
    <property type="term" value="C:cytoplasm"/>
    <property type="evidence" value="ECO:0007669"/>
    <property type="project" value="UniProtKB-SubCell"/>
</dbReference>
<dbReference type="GO" id="GO:0008990">
    <property type="term" value="F:rRNA (guanine-N2-)-methyltransferase activity"/>
    <property type="evidence" value="ECO:0007669"/>
    <property type="project" value="UniProtKB-UniRule"/>
</dbReference>
<dbReference type="CDD" id="cd02440">
    <property type="entry name" value="AdoMet_MTases"/>
    <property type="match status" value="1"/>
</dbReference>
<dbReference type="Gene3D" id="3.40.50.150">
    <property type="entry name" value="Vaccinia Virus protein VP39"/>
    <property type="match status" value="1"/>
</dbReference>
<dbReference type="HAMAP" id="MF_01523">
    <property type="entry name" value="16SrRNA_methyltr_J"/>
    <property type="match status" value="1"/>
</dbReference>
<dbReference type="InterPro" id="IPR007536">
    <property type="entry name" value="16SrRNA_methylTrfase_J"/>
</dbReference>
<dbReference type="InterPro" id="IPR029063">
    <property type="entry name" value="SAM-dependent_MTases_sf"/>
</dbReference>
<dbReference type="PANTHER" id="PTHR36112">
    <property type="entry name" value="RIBOSOMAL RNA SMALL SUBUNIT METHYLTRANSFERASE J"/>
    <property type="match status" value="1"/>
</dbReference>
<dbReference type="PANTHER" id="PTHR36112:SF1">
    <property type="entry name" value="RIBOSOMAL RNA SMALL SUBUNIT METHYLTRANSFERASE J"/>
    <property type="match status" value="1"/>
</dbReference>
<dbReference type="Pfam" id="PF04445">
    <property type="entry name" value="SAM_MT"/>
    <property type="match status" value="1"/>
</dbReference>
<dbReference type="SUPFAM" id="SSF53335">
    <property type="entry name" value="S-adenosyl-L-methionine-dependent methyltransferases"/>
    <property type="match status" value="1"/>
</dbReference>
<proteinExistence type="inferred from homology"/>
<feature type="chain" id="PRO_0000212073" description="Ribosomal RNA small subunit methyltransferase J">
    <location>
        <begin position="1"/>
        <end position="243"/>
    </location>
</feature>
<feature type="binding site" evidence="1">
    <location>
        <begin position="112"/>
        <end position="113"/>
    </location>
    <ligand>
        <name>S-adenosyl-L-methionine</name>
        <dbReference type="ChEBI" id="CHEBI:59789"/>
    </ligand>
</feature>
<feature type="binding site" evidence="1">
    <location>
        <position position="164"/>
    </location>
    <ligand>
        <name>S-adenosyl-L-methionine</name>
        <dbReference type="ChEBI" id="CHEBI:59789"/>
    </ligand>
</feature>